<protein>
    <recommendedName>
        <fullName>Transcriptional regulatory protein dep1</fullName>
    </recommendedName>
</protein>
<sequence>MTENLQSESIPHEILPKEPFDLPMNNLKSSPKNKDSEKRINNSIAESEQVVDSALSNPETNANEDIIAPQLPSQNSEIIEKNSPVNKLNSSTSLTTHQLASLPKLEVTDHDNVSEAETVVLNEDEEKETSLVGSVSVTEDLGDSSAIGRTILVNNSVEPQMENTANITIVSPSLKESDFESEEKATNDNNGLIETNHNSKLEESSEHEEEEDEESNIERTEDSDHQIPQRGGTLEAPRKGGPRSGVGSRKRKRATVSRKWSTNSESKIKRVALETSQEESDREIADRRSASEQAHEADDEKAIKRKEAFDALLNIETEFTFLRNRLYGKKLLKLNEHEEMIQNETHERFNACIDLITERRDDRVRLATENLMKQLGNIKNVMDYVTKQRKYQLLFDKRRIRQALLTKIATKCFQLLNKQKSVHDPTYITQKTMSYRQSALLQKQRIEYEAAVLCELNSFAGFPTAPIIETASFDDIRNDLLEMGCLSENQD</sequence>
<evidence type="ECO:0000250" key="1"/>
<evidence type="ECO:0000256" key="2">
    <source>
        <dbReference type="SAM" id="MobiDB-lite"/>
    </source>
</evidence>
<evidence type="ECO:0000269" key="3">
    <source>
    </source>
</evidence>
<evidence type="ECO:0000269" key="4">
    <source>
    </source>
</evidence>
<evidence type="ECO:0000269" key="5">
    <source>
    </source>
</evidence>
<evidence type="ECO:0000269" key="6">
    <source>
    </source>
</evidence>
<evidence type="ECO:0007829" key="7">
    <source>
        <dbReference type="PDB" id="8I03"/>
    </source>
</evidence>
<reference key="1">
    <citation type="journal article" date="2002" name="Nature">
        <title>The genome sequence of Schizosaccharomyces pombe.</title>
        <authorList>
            <person name="Wood V."/>
            <person name="Gwilliam R."/>
            <person name="Rajandream M.A."/>
            <person name="Lyne M.H."/>
            <person name="Lyne R."/>
            <person name="Stewart A."/>
            <person name="Sgouros J.G."/>
            <person name="Peat N."/>
            <person name="Hayles J."/>
            <person name="Baker S.G."/>
            <person name="Basham D."/>
            <person name="Bowman S."/>
            <person name="Brooks K."/>
            <person name="Brown D."/>
            <person name="Brown S."/>
            <person name="Chillingworth T."/>
            <person name="Churcher C.M."/>
            <person name="Collins M."/>
            <person name="Connor R."/>
            <person name="Cronin A."/>
            <person name="Davis P."/>
            <person name="Feltwell T."/>
            <person name="Fraser A."/>
            <person name="Gentles S."/>
            <person name="Goble A."/>
            <person name="Hamlin N."/>
            <person name="Harris D.E."/>
            <person name="Hidalgo J."/>
            <person name="Hodgson G."/>
            <person name="Holroyd S."/>
            <person name="Hornsby T."/>
            <person name="Howarth S."/>
            <person name="Huckle E.J."/>
            <person name="Hunt S."/>
            <person name="Jagels K."/>
            <person name="James K.D."/>
            <person name="Jones L."/>
            <person name="Jones M."/>
            <person name="Leather S."/>
            <person name="McDonald S."/>
            <person name="McLean J."/>
            <person name="Mooney P."/>
            <person name="Moule S."/>
            <person name="Mungall K.L."/>
            <person name="Murphy L.D."/>
            <person name="Niblett D."/>
            <person name="Odell C."/>
            <person name="Oliver K."/>
            <person name="O'Neil S."/>
            <person name="Pearson D."/>
            <person name="Quail M.A."/>
            <person name="Rabbinowitsch E."/>
            <person name="Rutherford K.M."/>
            <person name="Rutter S."/>
            <person name="Saunders D."/>
            <person name="Seeger K."/>
            <person name="Sharp S."/>
            <person name="Skelton J."/>
            <person name="Simmonds M.N."/>
            <person name="Squares R."/>
            <person name="Squares S."/>
            <person name="Stevens K."/>
            <person name="Taylor K."/>
            <person name="Taylor R.G."/>
            <person name="Tivey A."/>
            <person name="Walsh S.V."/>
            <person name="Warren T."/>
            <person name="Whitehead S."/>
            <person name="Woodward J.R."/>
            <person name="Volckaert G."/>
            <person name="Aert R."/>
            <person name="Robben J."/>
            <person name="Grymonprez B."/>
            <person name="Weltjens I."/>
            <person name="Vanstreels E."/>
            <person name="Rieger M."/>
            <person name="Schaefer M."/>
            <person name="Mueller-Auer S."/>
            <person name="Gabel C."/>
            <person name="Fuchs M."/>
            <person name="Duesterhoeft A."/>
            <person name="Fritzc C."/>
            <person name="Holzer E."/>
            <person name="Moestl D."/>
            <person name="Hilbert H."/>
            <person name="Borzym K."/>
            <person name="Langer I."/>
            <person name="Beck A."/>
            <person name="Lehrach H."/>
            <person name="Reinhardt R."/>
            <person name="Pohl T.M."/>
            <person name="Eger P."/>
            <person name="Zimmermann W."/>
            <person name="Wedler H."/>
            <person name="Wambutt R."/>
            <person name="Purnelle B."/>
            <person name="Goffeau A."/>
            <person name="Cadieu E."/>
            <person name="Dreano S."/>
            <person name="Gloux S."/>
            <person name="Lelaure V."/>
            <person name="Mottier S."/>
            <person name="Galibert F."/>
            <person name="Aves S.J."/>
            <person name="Xiang Z."/>
            <person name="Hunt C."/>
            <person name="Moore K."/>
            <person name="Hurst S.M."/>
            <person name="Lucas M."/>
            <person name="Rochet M."/>
            <person name="Gaillardin C."/>
            <person name="Tallada V.A."/>
            <person name="Garzon A."/>
            <person name="Thode G."/>
            <person name="Daga R.R."/>
            <person name="Cruzado L."/>
            <person name="Jimenez J."/>
            <person name="Sanchez M."/>
            <person name="del Rey F."/>
            <person name="Benito J."/>
            <person name="Dominguez A."/>
            <person name="Revuelta J.L."/>
            <person name="Moreno S."/>
            <person name="Armstrong J."/>
            <person name="Forsburg S.L."/>
            <person name="Cerutti L."/>
            <person name="Lowe T."/>
            <person name="McCombie W.R."/>
            <person name="Paulsen I."/>
            <person name="Potashkin J."/>
            <person name="Shpakovski G.V."/>
            <person name="Ussery D."/>
            <person name="Barrell B.G."/>
            <person name="Nurse P."/>
        </authorList>
    </citation>
    <scope>NUCLEOTIDE SEQUENCE [LARGE SCALE GENOMIC DNA]</scope>
    <source>
        <strain>972 / ATCC 24843</strain>
    </source>
</reference>
<reference key="2">
    <citation type="journal article" date="2000" name="Genes Cells">
        <title>Large-scale screening of intracellular protein localization in living fission yeast cells by the use of a GFP-fusion genomic DNA library.</title>
        <authorList>
            <person name="Ding D.-Q."/>
            <person name="Tomita Y."/>
            <person name="Yamamoto A."/>
            <person name="Chikashige Y."/>
            <person name="Haraguchi T."/>
            <person name="Hiraoka Y."/>
        </authorList>
    </citation>
    <scope>NUCLEOTIDE SEQUENCE [LARGE SCALE GENOMIC DNA] OF 166-354</scope>
    <scope>SUBCELLULAR LOCATION</scope>
    <source>
        <strain>ATCC 38364 / 968</strain>
    </source>
</reference>
<reference key="3">
    <citation type="journal article" date="2006" name="Nat. Biotechnol.">
        <title>ORFeome cloning and global analysis of protein localization in the fission yeast Schizosaccharomyces pombe.</title>
        <authorList>
            <person name="Matsuyama A."/>
            <person name="Arai R."/>
            <person name="Yashiroda Y."/>
            <person name="Shirai A."/>
            <person name="Kamata A."/>
            <person name="Sekido S."/>
            <person name="Kobayashi Y."/>
            <person name="Hashimoto A."/>
            <person name="Hamamoto M."/>
            <person name="Hiraoka Y."/>
            <person name="Horinouchi S."/>
            <person name="Yoshida M."/>
        </authorList>
    </citation>
    <scope>SUBCELLULAR LOCATION [LARGE SCALE ANALYSIS]</scope>
</reference>
<reference key="4">
    <citation type="journal article" date="2008" name="Genome Biol.">
        <title>Chromatin Central: towards the comparative proteome by accurate mapping of the yeast proteomic environment.</title>
        <authorList>
            <person name="Shevchenko A."/>
            <person name="Roguev A."/>
            <person name="Schaft D."/>
            <person name="Buchanan L."/>
            <person name="Habermann B."/>
            <person name="Sakalar C."/>
            <person name="Thomas H."/>
            <person name="Krogan N.J."/>
            <person name="Shevchenko A."/>
            <person name="Stewart A.F."/>
        </authorList>
    </citation>
    <scope>IDENTIFICATION IN THE RPD3C(L) COMPLEX</scope>
    <scope>IDENTIFICATION BY MASS SPECTROMETRY</scope>
</reference>
<reference key="5">
    <citation type="journal article" date="2008" name="J. Proteome Res.">
        <title>Phosphoproteome analysis of fission yeast.</title>
        <authorList>
            <person name="Wilson-Grady J.T."/>
            <person name="Villen J."/>
            <person name="Gygi S.P."/>
        </authorList>
    </citation>
    <scope>PHOSPHORYLATION [LARGE SCALE ANALYSIS] AT SER-204 AND SER-223</scope>
    <scope>IDENTIFICATION BY MASS SPECTROMETRY</scope>
</reference>
<feature type="chain" id="PRO_0000116878" description="Transcriptional regulatory protein dep1">
    <location>
        <begin position="1"/>
        <end position="491"/>
    </location>
</feature>
<feature type="region of interest" description="Disordered" evidence="2">
    <location>
        <begin position="1"/>
        <end position="74"/>
    </location>
</feature>
<feature type="region of interest" description="Disordered" evidence="2">
    <location>
        <begin position="155"/>
        <end position="301"/>
    </location>
</feature>
<feature type="compositionally biased region" description="Basic and acidic residues" evidence="2">
    <location>
        <begin position="10"/>
        <end position="20"/>
    </location>
</feature>
<feature type="compositionally biased region" description="Polar residues" evidence="2">
    <location>
        <begin position="54"/>
        <end position="63"/>
    </location>
</feature>
<feature type="compositionally biased region" description="Polar residues" evidence="2">
    <location>
        <begin position="155"/>
        <end position="171"/>
    </location>
</feature>
<feature type="compositionally biased region" description="Basic and acidic residues" evidence="2">
    <location>
        <begin position="175"/>
        <end position="186"/>
    </location>
</feature>
<feature type="compositionally biased region" description="Polar residues" evidence="2">
    <location>
        <begin position="187"/>
        <end position="196"/>
    </location>
</feature>
<feature type="compositionally biased region" description="Acidic residues" evidence="2">
    <location>
        <begin position="205"/>
        <end position="215"/>
    </location>
</feature>
<feature type="compositionally biased region" description="Basic and acidic residues" evidence="2">
    <location>
        <begin position="216"/>
        <end position="227"/>
    </location>
</feature>
<feature type="compositionally biased region" description="Basic and acidic residues" evidence="2">
    <location>
        <begin position="282"/>
        <end position="301"/>
    </location>
</feature>
<feature type="modified residue" description="Phosphoserine" evidence="5">
    <location>
        <position position="204"/>
    </location>
</feature>
<feature type="modified residue" description="Phosphoserine" evidence="5">
    <location>
        <position position="223"/>
    </location>
</feature>
<feature type="helix" evidence="7">
    <location>
        <begin position="312"/>
        <end position="342"/>
    </location>
</feature>
<feature type="helix" evidence="7">
    <location>
        <begin position="348"/>
        <end position="422"/>
    </location>
</feature>
<feature type="helix" evidence="7">
    <location>
        <begin position="436"/>
        <end position="459"/>
    </location>
</feature>
<feature type="helix" evidence="7">
    <location>
        <begin position="473"/>
        <end position="483"/>
    </location>
</feature>
<gene>
    <name type="primary">dep1</name>
    <name type="ORF">SPBC21C3.02c</name>
</gene>
<organism>
    <name type="scientific">Schizosaccharomyces pombe (strain 972 / ATCC 24843)</name>
    <name type="common">Fission yeast</name>
    <dbReference type="NCBI Taxonomy" id="284812"/>
    <lineage>
        <taxon>Eukaryota</taxon>
        <taxon>Fungi</taxon>
        <taxon>Dikarya</taxon>
        <taxon>Ascomycota</taxon>
        <taxon>Taphrinomycotina</taxon>
        <taxon>Schizosaccharomycetes</taxon>
        <taxon>Schizosaccharomycetales</taxon>
        <taxon>Schizosaccharomycetaceae</taxon>
        <taxon>Schizosaccharomyces</taxon>
    </lineage>
</organism>
<name>DEP1_SCHPO</name>
<comment type="function">
    <text evidence="1">Component of the RPD3C(L) histone deacetylase complex (HDAC) responsible for the deacetylation of lysine residues on the N-terminal part of the core histones (H2A, H2B, H3 and H4). Histone deacetylation gives a tag for epigenetic repression and plays an important role in transcriptional regulation, cell cycle progression and developmental events (By similarity).</text>
</comment>
<comment type="subunit">
    <text evidence="6">Component of the RPD3C(L) complex.</text>
</comment>
<comment type="subcellular location">
    <subcellularLocation>
        <location evidence="3 4">Nucleus</location>
    </subcellularLocation>
</comment>
<dbReference type="EMBL" id="CU329671">
    <property type="protein sequence ID" value="CAB76038.1"/>
    <property type="molecule type" value="Genomic_DNA"/>
</dbReference>
<dbReference type="EMBL" id="AB027934">
    <property type="protein sequence ID" value="BAA87238.1"/>
    <property type="molecule type" value="Genomic_DNA"/>
</dbReference>
<dbReference type="EMBL" id="AB027956">
    <property type="protein sequence ID" value="BAA87260.1"/>
    <property type="molecule type" value="Genomic_DNA"/>
</dbReference>
<dbReference type="PIR" id="T50346">
    <property type="entry name" value="T50346"/>
</dbReference>
<dbReference type="RefSeq" id="NP_596582.1">
    <property type="nucleotide sequence ID" value="NM_001022502.2"/>
</dbReference>
<dbReference type="PDB" id="8I03">
    <property type="method" value="EM"/>
    <property type="resolution" value="3.20 A"/>
    <property type="chains" value="E=1-491"/>
</dbReference>
<dbReference type="PDBsum" id="8I03"/>
<dbReference type="EMDB" id="EMD-35093"/>
<dbReference type="SMR" id="Q9P7M1"/>
<dbReference type="BioGRID" id="277121">
    <property type="interactions" value="81"/>
</dbReference>
<dbReference type="ComplexPortal" id="CPX-9129">
    <property type="entry name" value="RPD3L histone deacetylase complex"/>
</dbReference>
<dbReference type="FunCoup" id="Q9P7M1">
    <property type="interactions" value="24"/>
</dbReference>
<dbReference type="STRING" id="284812.Q9P7M1"/>
<dbReference type="iPTMnet" id="Q9P7M1"/>
<dbReference type="PaxDb" id="4896-SPBC21C3.02c.1"/>
<dbReference type="EnsemblFungi" id="SPBC21C3.02c.1">
    <property type="protein sequence ID" value="SPBC21C3.02c.1:pep"/>
    <property type="gene ID" value="SPBC21C3.02c"/>
</dbReference>
<dbReference type="GeneID" id="2540595"/>
<dbReference type="KEGG" id="spo:2540595"/>
<dbReference type="PomBase" id="SPBC21C3.02c">
    <property type="gene designation" value="dep1"/>
</dbReference>
<dbReference type="VEuPathDB" id="FungiDB:SPBC21C3.02c"/>
<dbReference type="eggNOG" id="ENOG502S14R">
    <property type="taxonomic scope" value="Eukaryota"/>
</dbReference>
<dbReference type="HOGENOM" id="CLU_555700_0_0_1"/>
<dbReference type="InParanoid" id="Q9P7M1"/>
<dbReference type="OMA" id="IQNETHE"/>
<dbReference type="Reactome" id="R-SPO-3214815">
    <property type="pathway name" value="HDACs deacetylate histones"/>
</dbReference>
<dbReference type="Reactome" id="R-SPO-5689880">
    <property type="pathway name" value="Ub-specific processing proteases"/>
</dbReference>
<dbReference type="PRO" id="PR:Q9P7M1"/>
<dbReference type="Proteomes" id="UP000002485">
    <property type="component" value="Chromosome II"/>
</dbReference>
<dbReference type="GO" id="GO:0005634">
    <property type="term" value="C:nucleus"/>
    <property type="evidence" value="ECO:0007005"/>
    <property type="project" value="PomBase"/>
</dbReference>
<dbReference type="GO" id="GO:0033698">
    <property type="term" value="C:Rpd3L complex"/>
    <property type="evidence" value="ECO:0000314"/>
    <property type="project" value="PomBase"/>
</dbReference>
<dbReference type="GO" id="GO:0070210">
    <property type="term" value="C:Rpd3L-Expanded complex"/>
    <property type="evidence" value="ECO:0000314"/>
    <property type="project" value="PomBase"/>
</dbReference>
<dbReference type="GO" id="GO:0070822">
    <property type="term" value="C:Sin3-type complex"/>
    <property type="evidence" value="ECO:0000318"/>
    <property type="project" value="GO_Central"/>
</dbReference>
<dbReference type="GO" id="GO:0042826">
    <property type="term" value="F:histone deacetylase binding"/>
    <property type="evidence" value="ECO:0000318"/>
    <property type="project" value="GO_Central"/>
</dbReference>
<dbReference type="GO" id="GO:0000122">
    <property type="term" value="P:negative regulation of transcription by RNA polymerase II"/>
    <property type="evidence" value="ECO:0000318"/>
    <property type="project" value="GO_Central"/>
</dbReference>
<dbReference type="GO" id="GO:0045815">
    <property type="term" value="P:transcription initiation-coupled chromatin remodeling"/>
    <property type="evidence" value="ECO:0000305"/>
    <property type="project" value="PomBase"/>
</dbReference>
<dbReference type="InterPro" id="IPR013907">
    <property type="entry name" value="Sds3"/>
</dbReference>
<dbReference type="PANTHER" id="PTHR21964">
    <property type="entry name" value="BREAST CANCER METASTASIS-SUPPRESSOR 1"/>
    <property type="match status" value="1"/>
</dbReference>
<dbReference type="Pfam" id="PF08598">
    <property type="entry name" value="Sds3"/>
    <property type="match status" value="1"/>
</dbReference>
<dbReference type="SMART" id="SM01401">
    <property type="entry name" value="Sds3"/>
    <property type="match status" value="1"/>
</dbReference>
<accession>Q9P7M1</accession>
<accession>Q9UTW6</accession>
<accession>Q9UTY3</accession>
<keyword id="KW-0002">3D-structure</keyword>
<keyword id="KW-0156">Chromatin regulator</keyword>
<keyword id="KW-0539">Nucleus</keyword>
<keyword id="KW-0597">Phosphoprotein</keyword>
<keyword id="KW-1185">Reference proteome</keyword>
<keyword id="KW-0678">Repressor</keyword>
<keyword id="KW-0804">Transcription</keyword>
<keyword id="KW-0805">Transcription regulation</keyword>
<proteinExistence type="evidence at protein level"/>